<comment type="function">
    <text evidence="1">Catalyzes the base-exchange of a guanine (G) residue with the queuine precursor 7-aminomethyl-7-deazaguanine (PreQ1) at position 34 (anticodon wobble position) in tRNAs with GU(N) anticodons (tRNA-Asp, -Asn, -His and -Tyr). Catalysis occurs through a double-displacement mechanism. The nucleophile active site attacks the C1' of nucleotide 34 to detach the guanine base from the RNA, forming a covalent enzyme-RNA intermediate. The proton acceptor active site deprotonates the incoming PreQ1, allowing a nucleophilic attack on the C1' of the ribose to form the product. After dissociation, two additional enzymatic reactions on the tRNA convert PreQ1 to queuine (Q), resulting in the hypermodified nucleoside queuosine (7-(((4,5-cis-dihydroxy-2-cyclopenten-1-yl)amino)methyl)-7-deazaguanosine).</text>
</comment>
<comment type="catalytic activity">
    <reaction evidence="1">
        <text>7-aminomethyl-7-carbaguanine + guanosine(34) in tRNA = 7-aminomethyl-7-carbaguanosine(34) in tRNA + guanine</text>
        <dbReference type="Rhea" id="RHEA:24104"/>
        <dbReference type="Rhea" id="RHEA-COMP:10341"/>
        <dbReference type="Rhea" id="RHEA-COMP:10342"/>
        <dbReference type="ChEBI" id="CHEBI:16235"/>
        <dbReference type="ChEBI" id="CHEBI:58703"/>
        <dbReference type="ChEBI" id="CHEBI:74269"/>
        <dbReference type="ChEBI" id="CHEBI:82833"/>
        <dbReference type="EC" id="2.4.2.29"/>
    </reaction>
</comment>
<comment type="cofactor">
    <cofactor evidence="1">
        <name>Zn(2+)</name>
        <dbReference type="ChEBI" id="CHEBI:29105"/>
    </cofactor>
    <text evidence="1">Binds 1 zinc ion per subunit.</text>
</comment>
<comment type="pathway">
    <text evidence="1">tRNA modification; tRNA-queuosine biosynthesis.</text>
</comment>
<comment type="subunit">
    <text evidence="1">Homodimer. Within each dimer, one monomer is responsible for RNA recognition and catalysis, while the other monomer binds to the replacement base PreQ1.</text>
</comment>
<comment type="similarity">
    <text evidence="1">Belongs to the queuine tRNA-ribosyltransferase family.</text>
</comment>
<proteinExistence type="inferred from homology"/>
<organism>
    <name type="scientific">Streptococcus pneumoniae serotype 4 (strain ATCC BAA-334 / TIGR4)</name>
    <dbReference type="NCBI Taxonomy" id="170187"/>
    <lineage>
        <taxon>Bacteria</taxon>
        <taxon>Bacillati</taxon>
        <taxon>Bacillota</taxon>
        <taxon>Bacilli</taxon>
        <taxon>Lactobacillales</taxon>
        <taxon>Streptococcaceae</taxon>
        <taxon>Streptococcus</taxon>
    </lineage>
</organism>
<feature type="chain" id="PRO_0000135533" description="Queuine tRNA-ribosyltransferase">
    <location>
        <begin position="1"/>
        <end position="380"/>
    </location>
</feature>
<feature type="region of interest" description="RNA binding" evidence="1">
    <location>
        <begin position="251"/>
        <end position="257"/>
    </location>
</feature>
<feature type="region of interest" description="RNA binding; important for wobble base 34 recognition" evidence="1">
    <location>
        <begin position="275"/>
        <end position="279"/>
    </location>
</feature>
<feature type="active site" description="Proton acceptor" evidence="1">
    <location>
        <position position="96"/>
    </location>
</feature>
<feature type="active site" description="Nucleophile" evidence="1">
    <location>
        <position position="270"/>
    </location>
</feature>
<feature type="binding site" evidence="1">
    <location>
        <begin position="96"/>
        <end position="100"/>
    </location>
    <ligand>
        <name>substrate</name>
    </ligand>
</feature>
<feature type="binding site" evidence="1">
    <location>
        <position position="150"/>
    </location>
    <ligand>
        <name>substrate</name>
    </ligand>
</feature>
<feature type="binding site" evidence="1">
    <location>
        <position position="193"/>
    </location>
    <ligand>
        <name>substrate</name>
    </ligand>
</feature>
<feature type="binding site" evidence="1">
    <location>
        <position position="220"/>
    </location>
    <ligand>
        <name>substrate</name>
    </ligand>
</feature>
<feature type="binding site" evidence="1">
    <location>
        <position position="308"/>
    </location>
    <ligand>
        <name>Zn(2+)</name>
        <dbReference type="ChEBI" id="CHEBI:29105"/>
    </ligand>
</feature>
<feature type="binding site" evidence="1">
    <location>
        <position position="310"/>
    </location>
    <ligand>
        <name>Zn(2+)</name>
        <dbReference type="ChEBI" id="CHEBI:29105"/>
    </ligand>
</feature>
<feature type="binding site" evidence="1">
    <location>
        <position position="313"/>
    </location>
    <ligand>
        <name>Zn(2+)</name>
        <dbReference type="ChEBI" id="CHEBI:29105"/>
    </ligand>
</feature>
<feature type="binding site" evidence="1">
    <location>
        <position position="339"/>
    </location>
    <ligand>
        <name>Zn(2+)</name>
        <dbReference type="ChEBI" id="CHEBI:29105"/>
    </ligand>
</feature>
<evidence type="ECO:0000255" key="1">
    <source>
        <dbReference type="HAMAP-Rule" id="MF_00168"/>
    </source>
</evidence>
<dbReference type="EC" id="2.4.2.29" evidence="1"/>
<dbReference type="EMBL" id="AE005672">
    <property type="protein sequence ID" value="AAK76122.1"/>
    <property type="molecule type" value="Genomic_DNA"/>
</dbReference>
<dbReference type="PIR" id="A95241">
    <property type="entry name" value="A95241"/>
</dbReference>
<dbReference type="RefSeq" id="WP_001285241.1">
    <property type="nucleotide sequence ID" value="NZ_CP155539.1"/>
</dbReference>
<dbReference type="SMR" id="P66907"/>
<dbReference type="PaxDb" id="170187-SP_2058"/>
<dbReference type="EnsemblBacteria" id="AAK76122">
    <property type="protein sequence ID" value="AAK76122"/>
    <property type="gene ID" value="SP_2058"/>
</dbReference>
<dbReference type="KEGG" id="spn:SP_2058"/>
<dbReference type="eggNOG" id="COG0343">
    <property type="taxonomic scope" value="Bacteria"/>
</dbReference>
<dbReference type="PhylomeDB" id="P66907"/>
<dbReference type="BioCyc" id="SPNE170187:G1FZB-2127-MONOMER"/>
<dbReference type="UniPathway" id="UPA00392"/>
<dbReference type="Proteomes" id="UP000000585">
    <property type="component" value="Chromosome"/>
</dbReference>
<dbReference type="GO" id="GO:0005829">
    <property type="term" value="C:cytosol"/>
    <property type="evidence" value="ECO:0007669"/>
    <property type="project" value="TreeGrafter"/>
</dbReference>
<dbReference type="GO" id="GO:0046872">
    <property type="term" value="F:metal ion binding"/>
    <property type="evidence" value="ECO:0007669"/>
    <property type="project" value="UniProtKB-KW"/>
</dbReference>
<dbReference type="GO" id="GO:0008479">
    <property type="term" value="F:tRNA-guanosine(34) queuine transglycosylase activity"/>
    <property type="evidence" value="ECO:0007669"/>
    <property type="project" value="UniProtKB-UniRule"/>
</dbReference>
<dbReference type="GO" id="GO:0008616">
    <property type="term" value="P:queuosine biosynthetic process"/>
    <property type="evidence" value="ECO:0007669"/>
    <property type="project" value="UniProtKB-UniRule"/>
</dbReference>
<dbReference type="GO" id="GO:0002099">
    <property type="term" value="P:tRNA wobble guanine modification"/>
    <property type="evidence" value="ECO:0007669"/>
    <property type="project" value="TreeGrafter"/>
</dbReference>
<dbReference type="GO" id="GO:0101030">
    <property type="term" value="P:tRNA-guanine transglycosylation"/>
    <property type="evidence" value="ECO:0007669"/>
    <property type="project" value="InterPro"/>
</dbReference>
<dbReference type="FunFam" id="3.20.20.105:FF:000001">
    <property type="entry name" value="Queuine tRNA-ribosyltransferase"/>
    <property type="match status" value="1"/>
</dbReference>
<dbReference type="Gene3D" id="3.20.20.105">
    <property type="entry name" value="Queuine tRNA-ribosyltransferase-like"/>
    <property type="match status" value="1"/>
</dbReference>
<dbReference type="HAMAP" id="MF_00168">
    <property type="entry name" value="Q_tRNA_Tgt"/>
    <property type="match status" value="1"/>
</dbReference>
<dbReference type="InterPro" id="IPR050076">
    <property type="entry name" value="ArchSynthase1/Queuine_TRR"/>
</dbReference>
<dbReference type="InterPro" id="IPR004803">
    <property type="entry name" value="TGT"/>
</dbReference>
<dbReference type="InterPro" id="IPR036511">
    <property type="entry name" value="TGT-like_sf"/>
</dbReference>
<dbReference type="InterPro" id="IPR002616">
    <property type="entry name" value="tRNA_ribo_trans-like"/>
</dbReference>
<dbReference type="NCBIfam" id="TIGR00430">
    <property type="entry name" value="Q_tRNA_tgt"/>
    <property type="match status" value="1"/>
</dbReference>
<dbReference type="NCBIfam" id="TIGR00449">
    <property type="entry name" value="tgt_general"/>
    <property type="match status" value="1"/>
</dbReference>
<dbReference type="PANTHER" id="PTHR46499">
    <property type="entry name" value="QUEUINE TRNA-RIBOSYLTRANSFERASE"/>
    <property type="match status" value="1"/>
</dbReference>
<dbReference type="PANTHER" id="PTHR46499:SF1">
    <property type="entry name" value="QUEUINE TRNA-RIBOSYLTRANSFERASE"/>
    <property type="match status" value="1"/>
</dbReference>
<dbReference type="Pfam" id="PF01702">
    <property type="entry name" value="TGT"/>
    <property type="match status" value="1"/>
</dbReference>
<dbReference type="SUPFAM" id="SSF51713">
    <property type="entry name" value="tRNA-guanine transglycosylase"/>
    <property type="match status" value="1"/>
</dbReference>
<gene>
    <name evidence="1" type="primary">tgt</name>
    <name type="ordered locus">SP_2058</name>
</gene>
<protein>
    <recommendedName>
        <fullName evidence="1">Queuine tRNA-ribosyltransferase</fullName>
        <ecNumber evidence="1">2.4.2.29</ecNumber>
    </recommendedName>
    <alternativeName>
        <fullName evidence="1">Guanine insertion enzyme</fullName>
    </alternativeName>
    <alternativeName>
        <fullName evidence="1">tRNA-guanine transglycosylase</fullName>
    </alternativeName>
</protein>
<keyword id="KW-0328">Glycosyltransferase</keyword>
<keyword id="KW-0479">Metal-binding</keyword>
<keyword id="KW-0671">Queuosine biosynthesis</keyword>
<keyword id="KW-1185">Reference proteome</keyword>
<keyword id="KW-0808">Transferase</keyword>
<keyword id="KW-0819">tRNA processing</keyword>
<keyword id="KW-0862">Zinc</keyword>
<reference key="1">
    <citation type="journal article" date="2001" name="Science">
        <title>Complete genome sequence of a virulent isolate of Streptococcus pneumoniae.</title>
        <authorList>
            <person name="Tettelin H."/>
            <person name="Nelson K.E."/>
            <person name="Paulsen I.T."/>
            <person name="Eisen J.A."/>
            <person name="Read T.D."/>
            <person name="Peterson S.N."/>
            <person name="Heidelberg J.F."/>
            <person name="DeBoy R.T."/>
            <person name="Haft D.H."/>
            <person name="Dodson R.J."/>
            <person name="Durkin A.S."/>
            <person name="Gwinn M.L."/>
            <person name="Kolonay J.F."/>
            <person name="Nelson W.C."/>
            <person name="Peterson J.D."/>
            <person name="Umayam L.A."/>
            <person name="White O."/>
            <person name="Salzberg S.L."/>
            <person name="Lewis M.R."/>
            <person name="Radune D."/>
            <person name="Holtzapple E.K."/>
            <person name="Khouri H.M."/>
            <person name="Wolf A.M."/>
            <person name="Utterback T.R."/>
            <person name="Hansen C.L."/>
            <person name="McDonald L.A."/>
            <person name="Feldblyum T.V."/>
            <person name="Angiuoli S.V."/>
            <person name="Dickinson T."/>
            <person name="Hickey E.K."/>
            <person name="Holt I.E."/>
            <person name="Loftus B.J."/>
            <person name="Yang F."/>
            <person name="Smith H.O."/>
            <person name="Venter J.C."/>
            <person name="Dougherty B.A."/>
            <person name="Morrison D.A."/>
            <person name="Hollingshead S.K."/>
            <person name="Fraser C.M."/>
        </authorList>
    </citation>
    <scope>NUCLEOTIDE SEQUENCE [LARGE SCALE GENOMIC DNA]</scope>
    <source>
        <strain>ATCC BAA-334 / TIGR4</strain>
    </source>
</reference>
<accession>P66907</accession>
<accession>Q97NH1</accession>
<name>TGT_STRPN</name>
<sequence>MSDSPIKYRLIKKEKHTGARLGEIITPHGTFPTPMFMPVGTQATVKTQSPEELKEMGSGIILSNTYHLWLRPGDELIARAGGLHKFMNWDQPILTDSGGFQVYSLADSRNITEEGVTFKNHLNGSKMFLSPEKAISIQNNLGSDIMMSFDECPQFYQPYDYVKKSIERTSRWAERGLKAHRRPHDQGLFGIVQGAGFEDLRRQSAHDLVSMDFSGYSIGGLAVGETHEEMNAVLDFTTQLLPENKPRYLMGVGAPDSLIDGVIRGVDMFDCVLPTRIARNGTCMTSQGRLVVKNAQFAEDFTPLDPECDCYTCNNYTRAYLRHLLKADETFGIRLTSYHNLYFLLNLMKQVRQAIMDDNLLEFREYFVEKYGYNKSGRNF</sequence>